<protein>
    <recommendedName>
        <fullName>Protein LLP homolog</fullName>
    </recommendedName>
    <alternativeName>
        <fullName>Protein LAPS18-like</fullName>
    </alternativeName>
</protein>
<keyword id="KW-0158">Chromosome</keyword>
<keyword id="KW-0539">Nucleus</keyword>
<keyword id="KW-1185">Reference proteome</keyword>
<evidence type="ECO:0000250" key="1">
    <source>
        <dbReference type="UniProtKB" id="Q9BRT6"/>
    </source>
</evidence>
<evidence type="ECO:0000250" key="2">
    <source>
        <dbReference type="UniProtKB" id="Q9D945"/>
    </source>
</evidence>
<evidence type="ECO:0000256" key="3">
    <source>
        <dbReference type="SAM" id="MobiDB-lite"/>
    </source>
</evidence>
<evidence type="ECO:0000305" key="4"/>
<accession>Q6NVR5</accession>
<sequence length="123" mass="14276">MAKSIRSKWKRKMRAEKRKKNAPKELARLKNVLAKGSEVLMDDVKEIATVVPSKKINEKTDMDVDAPEGDSSKMDMELKRNKKNLRDQHGQYPVWLNQRQQKKLKSQCGKKKGKSKQAKKLAW</sequence>
<organism>
    <name type="scientific">Xenopus tropicalis</name>
    <name type="common">Western clawed frog</name>
    <name type="synonym">Silurana tropicalis</name>
    <dbReference type="NCBI Taxonomy" id="8364"/>
    <lineage>
        <taxon>Eukaryota</taxon>
        <taxon>Metazoa</taxon>
        <taxon>Chordata</taxon>
        <taxon>Craniata</taxon>
        <taxon>Vertebrata</taxon>
        <taxon>Euteleostomi</taxon>
        <taxon>Amphibia</taxon>
        <taxon>Batrachia</taxon>
        <taxon>Anura</taxon>
        <taxon>Pipoidea</taxon>
        <taxon>Pipidae</taxon>
        <taxon>Xenopodinae</taxon>
        <taxon>Xenopus</taxon>
        <taxon>Silurana</taxon>
    </lineage>
</organism>
<proteinExistence type="evidence at transcript level"/>
<reference key="1">
    <citation type="submission" date="2004-03" db="EMBL/GenBank/DDBJ databases">
        <authorList>
            <consortium name="NIH - Xenopus Gene Collection (XGC) project"/>
        </authorList>
    </citation>
    <scope>NUCLEOTIDE SEQUENCE [LARGE SCALE MRNA]</scope>
    <source>
        <tissue>Tail bud</tissue>
    </source>
</reference>
<gene>
    <name type="primary">llph</name>
</gene>
<dbReference type="EMBL" id="BC067940">
    <property type="protein sequence ID" value="AAH67940.1"/>
    <property type="molecule type" value="mRNA"/>
</dbReference>
<dbReference type="RefSeq" id="NP_001001225.1">
    <property type="nucleotide sequence ID" value="NM_001001225.1"/>
</dbReference>
<dbReference type="RefSeq" id="XP_031753659.1">
    <property type="nucleotide sequence ID" value="XM_031897799.1"/>
</dbReference>
<dbReference type="RefSeq" id="XP_031753660.1">
    <property type="nucleotide sequence ID" value="XM_031897800.1"/>
</dbReference>
<dbReference type="SMR" id="Q6NVR5"/>
<dbReference type="FunCoup" id="Q6NVR5">
    <property type="interactions" value="1195"/>
</dbReference>
<dbReference type="STRING" id="8364.ENSXETP00000012625"/>
<dbReference type="PaxDb" id="8364-ENSXETP00000025326"/>
<dbReference type="DNASU" id="407903"/>
<dbReference type="GeneID" id="407903"/>
<dbReference type="KEGG" id="xtr:407903"/>
<dbReference type="AGR" id="Xenbase:XB-GENE-959007"/>
<dbReference type="CTD" id="84298"/>
<dbReference type="Xenbase" id="XB-GENE-959007">
    <property type="gene designation" value="llph"/>
</dbReference>
<dbReference type="eggNOG" id="KOG4811">
    <property type="taxonomic scope" value="Eukaryota"/>
</dbReference>
<dbReference type="HOGENOM" id="CLU_134502_0_0_1"/>
<dbReference type="InParanoid" id="Q6NVR5"/>
<dbReference type="OMA" id="YGNYPVW"/>
<dbReference type="OrthoDB" id="6257894at2759"/>
<dbReference type="PhylomeDB" id="Q6NVR5"/>
<dbReference type="TreeFam" id="TF314654"/>
<dbReference type="Proteomes" id="UP000008143">
    <property type="component" value="Chromosome 3"/>
</dbReference>
<dbReference type="Bgee" id="ENSXETG00000038218">
    <property type="expression patterns" value="Expressed in testis and 16 other cell types or tissues"/>
</dbReference>
<dbReference type="GO" id="GO:0005694">
    <property type="term" value="C:chromosome"/>
    <property type="evidence" value="ECO:0000250"/>
    <property type="project" value="UniProtKB"/>
</dbReference>
<dbReference type="GO" id="GO:0005730">
    <property type="term" value="C:nucleolus"/>
    <property type="evidence" value="ECO:0000250"/>
    <property type="project" value="UniProtKB"/>
</dbReference>
<dbReference type="GO" id="GO:0001099">
    <property type="term" value="F:basal RNA polymerase II transcription machinery binding"/>
    <property type="evidence" value="ECO:0000250"/>
    <property type="project" value="UniProtKB"/>
</dbReference>
<dbReference type="GO" id="GO:0097484">
    <property type="term" value="P:dendrite extension"/>
    <property type="evidence" value="ECO:0000250"/>
    <property type="project" value="UniProtKB"/>
</dbReference>
<dbReference type="GO" id="GO:0060999">
    <property type="term" value="P:positive regulation of dendritic spine development"/>
    <property type="evidence" value="ECO:0000250"/>
    <property type="project" value="UniProtKB"/>
</dbReference>
<dbReference type="InterPro" id="IPR018784">
    <property type="entry name" value="LLPH-like"/>
</dbReference>
<dbReference type="PANTHER" id="PTHR34253">
    <property type="entry name" value="PROTEIN LLP HOMOLOG"/>
    <property type="match status" value="1"/>
</dbReference>
<dbReference type="PANTHER" id="PTHR34253:SF1">
    <property type="entry name" value="PROTEIN LLP HOMOLOG"/>
    <property type="match status" value="1"/>
</dbReference>
<dbReference type="Pfam" id="PF10169">
    <property type="entry name" value="LLPH"/>
    <property type="match status" value="1"/>
</dbReference>
<comment type="function">
    <text evidence="2">Regulates dendritic and spine growth and synaptic transmission.</text>
</comment>
<comment type="subcellular location">
    <subcellularLocation>
        <location evidence="2">Nucleus</location>
        <location evidence="2">Nucleolus</location>
    </subcellularLocation>
    <subcellularLocation>
        <location evidence="1">Chromosome</location>
    </subcellularLocation>
    <text evidence="1 2">Cell-permeable protein (By similarity). Localizes at the chromosome periphery during mitosis (By similarity).</text>
</comment>
<comment type="similarity">
    <text evidence="4">Belongs to the learning-associated protein family.</text>
</comment>
<feature type="chain" id="PRO_0000274351" description="Protein LLP homolog">
    <location>
        <begin position="1"/>
        <end position="123"/>
    </location>
</feature>
<feature type="region of interest" description="Disordered" evidence="3">
    <location>
        <begin position="1"/>
        <end position="23"/>
    </location>
</feature>
<feature type="region of interest" description="Disordered" evidence="3">
    <location>
        <begin position="55"/>
        <end position="123"/>
    </location>
</feature>
<feature type="compositionally biased region" description="Basic residues" evidence="3">
    <location>
        <begin position="1"/>
        <end position="21"/>
    </location>
</feature>
<feature type="compositionally biased region" description="Basic and acidic residues" evidence="3">
    <location>
        <begin position="70"/>
        <end position="89"/>
    </location>
</feature>
<feature type="compositionally biased region" description="Basic residues" evidence="3">
    <location>
        <begin position="100"/>
        <end position="123"/>
    </location>
</feature>
<name>LLPH_XENTR</name>